<name>TRMFO_RUBXD</name>
<feature type="chain" id="PRO_0000346392" description="Methylenetetrahydrofolate--tRNA-(uracil-5-)-methyltransferase TrmFO">
    <location>
        <begin position="1"/>
        <end position="447"/>
    </location>
</feature>
<feature type="region of interest" description="Disordered" evidence="2">
    <location>
        <begin position="398"/>
        <end position="421"/>
    </location>
</feature>
<feature type="compositionally biased region" description="Basic and acidic residues" evidence="2">
    <location>
        <begin position="406"/>
        <end position="417"/>
    </location>
</feature>
<feature type="binding site" evidence="1">
    <location>
        <begin position="8"/>
        <end position="13"/>
    </location>
    <ligand>
        <name>FAD</name>
        <dbReference type="ChEBI" id="CHEBI:57692"/>
    </ligand>
</feature>
<gene>
    <name evidence="1" type="primary">trmFO</name>
    <name type="ordered locus">Rxyl_2330</name>
</gene>
<organism>
    <name type="scientific">Rubrobacter xylanophilus (strain DSM 9941 / JCM 11954 / NBRC 16129 / PRD-1)</name>
    <dbReference type="NCBI Taxonomy" id="266117"/>
    <lineage>
        <taxon>Bacteria</taxon>
        <taxon>Bacillati</taxon>
        <taxon>Actinomycetota</taxon>
        <taxon>Rubrobacteria</taxon>
        <taxon>Rubrobacterales</taxon>
        <taxon>Rubrobacteraceae</taxon>
        <taxon>Rubrobacter</taxon>
    </lineage>
</organism>
<accession>Q1ATM0</accession>
<dbReference type="EC" id="2.1.1.74" evidence="1"/>
<dbReference type="EMBL" id="CP000386">
    <property type="protein sequence ID" value="ABG05258.1"/>
    <property type="molecule type" value="Genomic_DNA"/>
</dbReference>
<dbReference type="RefSeq" id="WP_011565272.1">
    <property type="nucleotide sequence ID" value="NC_008148.1"/>
</dbReference>
<dbReference type="SMR" id="Q1ATM0"/>
<dbReference type="STRING" id="266117.Rxyl_2330"/>
<dbReference type="KEGG" id="rxy:Rxyl_2330"/>
<dbReference type="eggNOG" id="COG1206">
    <property type="taxonomic scope" value="Bacteria"/>
</dbReference>
<dbReference type="HOGENOM" id="CLU_033057_1_0_11"/>
<dbReference type="OrthoDB" id="9803114at2"/>
<dbReference type="PhylomeDB" id="Q1ATM0"/>
<dbReference type="Proteomes" id="UP000006637">
    <property type="component" value="Chromosome"/>
</dbReference>
<dbReference type="GO" id="GO:0005829">
    <property type="term" value="C:cytosol"/>
    <property type="evidence" value="ECO:0007669"/>
    <property type="project" value="TreeGrafter"/>
</dbReference>
<dbReference type="GO" id="GO:0050660">
    <property type="term" value="F:flavin adenine dinucleotide binding"/>
    <property type="evidence" value="ECO:0007669"/>
    <property type="project" value="UniProtKB-UniRule"/>
</dbReference>
<dbReference type="GO" id="GO:0047151">
    <property type="term" value="F:tRNA (uracil(54)-C5)-methyltransferase activity, 5,10-methylenetetrahydrofolate-dependent"/>
    <property type="evidence" value="ECO:0007669"/>
    <property type="project" value="UniProtKB-UniRule"/>
</dbReference>
<dbReference type="GO" id="GO:0030488">
    <property type="term" value="P:tRNA methylation"/>
    <property type="evidence" value="ECO:0007669"/>
    <property type="project" value="TreeGrafter"/>
</dbReference>
<dbReference type="GO" id="GO:0002098">
    <property type="term" value="P:tRNA wobble uridine modification"/>
    <property type="evidence" value="ECO:0007669"/>
    <property type="project" value="TreeGrafter"/>
</dbReference>
<dbReference type="Gene3D" id="3.50.50.60">
    <property type="entry name" value="FAD/NAD(P)-binding domain"/>
    <property type="match status" value="2"/>
</dbReference>
<dbReference type="HAMAP" id="MF_01037">
    <property type="entry name" value="TrmFO"/>
    <property type="match status" value="1"/>
</dbReference>
<dbReference type="InterPro" id="IPR036188">
    <property type="entry name" value="FAD/NAD-bd_sf"/>
</dbReference>
<dbReference type="InterPro" id="IPR002218">
    <property type="entry name" value="MnmG-rel"/>
</dbReference>
<dbReference type="InterPro" id="IPR040131">
    <property type="entry name" value="MnmG_N"/>
</dbReference>
<dbReference type="InterPro" id="IPR004417">
    <property type="entry name" value="TrmFO"/>
</dbReference>
<dbReference type="NCBIfam" id="TIGR00137">
    <property type="entry name" value="gid_trmFO"/>
    <property type="match status" value="1"/>
</dbReference>
<dbReference type="NCBIfam" id="NF003739">
    <property type="entry name" value="PRK05335.1"/>
    <property type="match status" value="1"/>
</dbReference>
<dbReference type="PANTHER" id="PTHR11806">
    <property type="entry name" value="GLUCOSE INHIBITED DIVISION PROTEIN A"/>
    <property type="match status" value="1"/>
</dbReference>
<dbReference type="PANTHER" id="PTHR11806:SF2">
    <property type="entry name" value="METHYLENETETRAHYDROFOLATE--TRNA-(URACIL-5-)-METHYLTRANSFERASE TRMFO"/>
    <property type="match status" value="1"/>
</dbReference>
<dbReference type="Pfam" id="PF01134">
    <property type="entry name" value="GIDA"/>
    <property type="match status" value="1"/>
</dbReference>
<dbReference type="PRINTS" id="PR00411">
    <property type="entry name" value="PNDRDTASEI"/>
</dbReference>
<dbReference type="SUPFAM" id="SSF51905">
    <property type="entry name" value="FAD/NAD(P)-binding domain"/>
    <property type="match status" value="1"/>
</dbReference>
<proteinExistence type="inferred from homology"/>
<reference key="1">
    <citation type="submission" date="2006-06" db="EMBL/GenBank/DDBJ databases">
        <title>Complete sequence of Rubrobacter xylanophilus DSM 9941.</title>
        <authorList>
            <consortium name="US DOE Joint Genome Institute"/>
            <person name="Copeland A."/>
            <person name="Lucas S."/>
            <person name="Lapidus A."/>
            <person name="Barry K."/>
            <person name="Detter J.C."/>
            <person name="Glavina del Rio T."/>
            <person name="Hammon N."/>
            <person name="Israni S."/>
            <person name="Dalin E."/>
            <person name="Tice H."/>
            <person name="Pitluck S."/>
            <person name="Munk A.C."/>
            <person name="Brettin T."/>
            <person name="Bruce D."/>
            <person name="Han C."/>
            <person name="Tapia R."/>
            <person name="Gilna P."/>
            <person name="Schmutz J."/>
            <person name="Larimer F."/>
            <person name="Land M."/>
            <person name="Hauser L."/>
            <person name="Kyrpides N."/>
            <person name="Lykidis A."/>
            <person name="da Costa M.S."/>
            <person name="Rainey F.A."/>
            <person name="Empadinhas N."/>
            <person name="Jolivet E."/>
            <person name="Battista J.R."/>
            <person name="Richardson P."/>
        </authorList>
    </citation>
    <scope>NUCLEOTIDE SEQUENCE [LARGE SCALE GENOMIC DNA]</scope>
    <source>
        <strain>DSM 9941 / JCM 11954 / NBRC 16129 / PRD-1</strain>
    </source>
</reference>
<protein>
    <recommendedName>
        <fullName evidence="1">Methylenetetrahydrofolate--tRNA-(uracil-5-)-methyltransferase TrmFO</fullName>
        <ecNumber evidence="1">2.1.1.74</ecNumber>
    </recommendedName>
    <alternativeName>
        <fullName evidence="1">Folate-dependent tRNA (uracil-5-)-methyltransferase</fullName>
    </alternativeName>
    <alternativeName>
        <fullName evidence="1">Folate-dependent tRNA(M-5-U54)-methyltransferase</fullName>
    </alternativeName>
</protein>
<evidence type="ECO:0000255" key="1">
    <source>
        <dbReference type="HAMAP-Rule" id="MF_01037"/>
    </source>
</evidence>
<evidence type="ECO:0000256" key="2">
    <source>
        <dbReference type="SAM" id="MobiDB-lite"/>
    </source>
</evidence>
<comment type="function">
    <text evidence="1">Catalyzes the folate-dependent formation of 5-methyl-uridine at position 54 (M-5-U54) in all tRNAs.</text>
</comment>
<comment type="catalytic activity">
    <reaction evidence="1">
        <text>uridine(54) in tRNA + (6R)-5,10-methylene-5,6,7,8-tetrahydrofolate + NADH + H(+) = 5-methyluridine(54) in tRNA + (6S)-5,6,7,8-tetrahydrofolate + NAD(+)</text>
        <dbReference type="Rhea" id="RHEA:16873"/>
        <dbReference type="Rhea" id="RHEA-COMP:10167"/>
        <dbReference type="Rhea" id="RHEA-COMP:10193"/>
        <dbReference type="ChEBI" id="CHEBI:15378"/>
        <dbReference type="ChEBI" id="CHEBI:15636"/>
        <dbReference type="ChEBI" id="CHEBI:57453"/>
        <dbReference type="ChEBI" id="CHEBI:57540"/>
        <dbReference type="ChEBI" id="CHEBI:57945"/>
        <dbReference type="ChEBI" id="CHEBI:65315"/>
        <dbReference type="ChEBI" id="CHEBI:74447"/>
        <dbReference type="EC" id="2.1.1.74"/>
    </reaction>
</comment>
<comment type="catalytic activity">
    <reaction evidence="1">
        <text>uridine(54) in tRNA + (6R)-5,10-methylene-5,6,7,8-tetrahydrofolate + NADPH + H(+) = 5-methyluridine(54) in tRNA + (6S)-5,6,7,8-tetrahydrofolate + NADP(+)</text>
        <dbReference type="Rhea" id="RHEA:62372"/>
        <dbReference type="Rhea" id="RHEA-COMP:10167"/>
        <dbReference type="Rhea" id="RHEA-COMP:10193"/>
        <dbReference type="ChEBI" id="CHEBI:15378"/>
        <dbReference type="ChEBI" id="CHEBI:15636"/>
        <dbReference type="ChEBI" id="CHEBI:57453"/>
        <dbReference type="ChEBI" id="CHEBI:57783"/>
        <dbReference type="ChEBI" id="CHEBI:58349"/>
        <dbReference type="ChEBI" id="CHEBI:65315"/>
        <dbReference type="ChEBI" id="CHEBI:74447"/>
        <dbReference type="EC" id="2.1.1.74"/>
    </reaction>
</comment>
<comment type="cofactor">
    <cofactor evidence="1">
        <name>FAD</name>
        <dbReference type="ChEBI" id="CHEBI:57692"/>
    </cofactor>
</comment>
<comment type="subcellular location">
    <subcellularLocation>
        <location evidence="1">Cytoplasm</location>
    </subcellularLocation>
</comment>
<comment type="similarity">
    <text evidence="1">Belongs to the MnmG family. TrmFO subfamily.</text>
</comment>
<sequence>MPDVTVVGGGLAGSEAAWQAARAGCRVELWEMRPVKETPAHHTDLFAELVCSNSLGNRSPETASGLLKEELRRLGSVILRCADANAVPAGGALGVAREDFARAVTETVGSHPNIEVVRREARDIPEGPAVIATGPLTSDALHRKIEELSGETLYFFDAASPILHRDSIDDSVVYRASRYGRGEADYLNCPMDEETYYAFVEELASAELSPIKKFEEDMYFEGCLPVETIARRGPDTLRFGPMKPVGLPDPRTGREPFAVVQLRQDDAEGRLYNIVGFQTRLRWGEQKRVFRMIPGLQRAEFARFGVMHRNTYLPSNRMLEATMKIRNALSERPLFFAGQLTGVEGYVESTAMGYIAGTNAARVARGLEPIRWPEGTMMGALARYITTKEGTLQPINSNWGLVPAPPKRENGRRLGRQERRRRQAEMALGVLERFAGEVLRPPVAAGR</sequence>
<keyword id="KW-0963">Cytoplasm</keyword>
<keyword id="KW-0274">FAD</keyword>
<keyword id="KW-0285">Flavoprotein</keyword>
<keyword id="KW-0489">Methyltransferase</keyword>
<keyword id="KW-0520">NAD</keyword>
<keyword id="KW-0521">NADP</keyword>
<keyword id="KW-1185">Reference proteome</keyword>
<keyword id="KW-0808">Transferase</keyword>
<keyword id="KW-0819">tRNA processing</keyword>